<gene>
    <name evidence="2" type="primary">ccsA</name>
    <name type="ordered locus">sync_1290</name>
</gene>
<sequence length="305" mass="32928">MDPVLGLGLFAFALLLLALPLAFWKVSSEKTSGLVTLLIATANLALTAQLVLRWWQSGHFPISNLYESLCFLAWACTLTQLLVERSWPTPIVAAAATPMGLGCIAFASFALPDQLQEASPLVPALRSSWLVMHVSVIMVSYAALLVGSLLSVAVLVTDRGHALELRSSSIGSGGYRRAALATPLGNVGDSEVQLSSVKFTRNELLDSLSYRTITVGFLLLTVGIISGAVWANEAWGSYWSWDPKETWALICWLVYAAYLHTRLSRGWQGRRPALVASAGLVVIGVCYIGVNLLGIGLHSYGWFFG</sequence>
<dbReference type="EMBL" id="CP000435">
    <property type="protein sequence ID" value="ABI47316.1"/>
    <property type="molecule type" value="Genomic_DNA"/>
</dbReference>
<dbReference type="SMR" id="Q0IAM4"/>
<dbReference type="STRING" id="64471.sync_1290"/>
<dbReference type="KEGG" id="syg:sync_1290"/>
<dbReference type="eggNOG" id="COG0755">
    <property type="taxonomic scope" value="Bacteria"/>
</dbReference>
<dbReference type="HOGENOM" id="CLU_049710_2_4_3"/>
<dbReference type="Proteomes" id="UP000001961">
    <property type="component" value="Chromosome"/>
</dbReference>
<dbReference type="GO" id="GO:0031676">
    <property type="term" value="C:plasma membrane-derived thylakoid membrane"/>
    <property type="evidence" value="ECO:0007669"/>
    <property type="project" value="UniProtKB-SubCell"/>
</dbReference>
<dbReference type="GO" id="GO:0020037">
    <property type="term" value="F:heme binding"/>
    <property type="evidence" value="ECO:0007669"/>
    <property type="project" value="InterPro"/>
</dbReference>
<dbReference type="GO" id="GO:0017004">
    <property type="term" value="P:cytochrome complex assembly"/>
    <property type="evidence" value="ECO:0007669"/>
    <property type="project" value="UniProtKB-UniRule"/>
</dbReference>
<dbReference type="HAMAP" id="MF_01391">
    <property type="entry name" value="CytC_CcsA"/>
    <property type="match status" value="1"/>
</dbReference>
<dbReference type="InterPro" id="IPR002541">
    <property type="entry name" value="Cyt_c_assembly"/>
</dbReference>
<dbReference type="InterPro" id="IPR017562">
    <property type="entry name" value="Cyt_c_biogenesis_CcsA"/>
</dbReference>
<dbReference type="InterPro" id="IPR045062">
    <property type="entry name" value="Cyt_c_biogenesis_CcsA/CcmC"/>
</dbReference>
<dbReference type="NCBIfam" id="TIGR03144">
    <property type="entry name" value="cytochr_II_ccsB"/>
    <property type="match status" value="1"/>
</dbReference>
<dbReference type="PANTHER" id="PTHR30071:SF1">
    <property type="entry name" value="CYTOCHROME B_B6 PROTEIN-RELATED"/>
    <property type="match status" value="1"/>
</dbReference>
<dbReference type="PANTHER" id="PTHR30071">
    <property type="entry name" value="HEME EXPORTER PROTEIN C"/>
    <property type="match status" value="1"/>
</dbReference>
<dbReference type="Pfam" id="PF01578">
    <property type="entry name" value="Cytochrom_C_asm"/>
    <property type="match status" value="1"/>
</dbReference>
<name>CCSA_SYNS3</name>
<organism>
    <name type="scientific">Synechococcus sp. (strain CC9311)</name>
    <dbReference type="NCBI Taxonomy" id="64471"/>
    <lineage>
        <taxon>Bacteria</taxon>
        <taxon>Bacillati</taxon>
        <taxon>Cyanobacteriota</taxon>
        <taxon>Cyanophyceae</taxon>
        <taxon>Synechococcales</taxon>
        <taxon>Synechococcaceae</taxon>
        <taxon>Synechococcus</taxon>
    </lineage>
</organism>
<comment type="function">
    <text evidence="2">Required during biogenesis of c-type cytochromes (cytochrome c6 and cytochrome f) at the step of heme attachment.</text>
</comment>
<comment type="subunit">
    <text evidence="1">May interact with ccs1.</text>
</comment>
<comment type="subcellular location">
    <subcellularLocation>
        <location evidence="2">Cellular thylakoid membrane</location>
        <topology evidence="2">Multi-pass membrane protein</topology>
    </subcellularLocation>
</comment>
<comment type="similarity">
    <text evidence="2">Belongs to the CcmF/CycK/Ccl1/NrfE/CcsA family.</text>
</comment>
<protein>
    <recommendedName>
        <fullName evidence="2">Cytochrome c biogenesis protein CcsA</fullName>
    </recommendedName>
</protein>
<feature type="chain" id="PRO_0000353717" description="Cytochrome c biogenesis protein CcsA">
    <location>
        <begin position="1"/>
        <end position="305"/>
    </location>
</feature>
<feature type="transmembrane region" description="Helical" evidence="2">
    <location>
        <begin position="4"/>
        <end position="24"/>
    </location>
</feature>
<feature type="transmembrane region" description="Helical" evidence="2">
    <location>
        <begin position="32"/>
        <end position="52"/>
    </location>
</feature>
<feature type="transmembrane region" description="Helical" evidence="2">
    <location>
        <begin position="58"/>
        <end position="78"/>
    </location>
</feature>
<feature type="transmembrane region" description="Helical" evidence="2">
    <location>
        <begin position="91"/>
        <end position="111"/>
    </location>
</feature>
<feature type="transmembrane region" description="Helical" evidence="2">
    <location>
        <begin position="136"/>
        <end position="156"/>
    </location>
</feature>
<feature type="transmembrane region" description="Helical" evidence="2">
    <location>
        <begin position="212"/>
        <end position="232"/>
    </location>
</feature>
<feature type="transmembrane region" description="Helical" evidence="2">
    <location>
        <begin position="246"/>
        <end position="263"/>
    </location>
</feature>
<feature type="transmembrane region" description="Helical" evidence="2">
    <location>
        <begin position="275"/>
        <end position="295"/>
    </location>
</feature>
<accession>Q0IAM4</accession>
<evidence type="ECO:0000250" key="1"/>
<evidence type="ECO:0000255" key="2">
    <source>
        <dbReference type="HAMAP-Rule" id="MF_01391"/>
    </source>
</evidence>
<proteinExistence type="inferred from homology"/>
<reference key="1">
    <citation type="journal article" date="2006" name="Proc. Natl. Acad. Sci. U.S.A.">
        <title>Genome sequence of Synechococcus CC9311: insights into adaptation to a coastal environment.</title>
        <authorList>
            <person name="Palenik B."/>
            <person name="Ren Q."/>
            <person name="Dupont C.L."/>
            <person name="Myers G.S."/>
            <person name="Heidelberg J.F."/>
            <person name="Badger J.H."/>
            <person name="Madupu R."/>
            <person name="Nelson W.C."/>
            <person name="Brinkac L.M."/>
            <person name="Dodson R.J."/>
            <person name="Durkin A.S."/>
            <person name="Daugherty S.C."/>
            <person name="Sullivan S.A."/>
            <person name="Khouri H."/>
            <person name="Mohamoud Y."/>
            <person name="Halpin R."/>
            <person name="Paulsen I.T."/>
        </authorList>
    </citation>
    <scope>NUCLEOTIDE SEQUENCE [LARGE SCALE GENOMIC DNA]</scope>
    <source>
        <strain>CC9311</strain>
    </source>
</reference>
<keyword id="KW-0201">Cytochrome c-type biogenesis</keyword>
<keyword id="KW-0472">Membrane</keyword>
<keyword id="KW-1185">Reference proteome</keyword>
<keyword id="KW-0793">Thylakoid</keyword>
<keyword id="KW-0812">Transmembrane</keyword>
<keyword id="KW-1133">Transmembrane helix</keyword>